<gene>
    <name type="primary">ipi1</name>
    <name type="ORF">SPCC1393.06c</name>
</gene>
<organism>
    <name type="scientific">Schizosaccharomyces pombe (strain 972 / ATCC 24843)</name>
    <name type="common">Fission yeast</name>
    <dbReference type="NCBI Taxonomy" id="284812"/>
    <lineage>
        <taxon>Eukaryota</taxon>
        <taxon>Fungi</taxon>
        <taxon>Dikarya</taxon>
        <taxon>Ascomycota</taxon>
        <taxon>Taphrinomycotina</taxon>
        <taxon>Schizosaccharomycetes</taxon>
        <taxon>Schizosaccharomycetales</taxon>
        <taxon>Schizosaccharomycetaceae</taxon>
        <taxon>Schizosaccharomyces</taxon>
    </lineage>
</organism>
<name>IPI1_SCHPO</name>
<proteinExistence type="inferred from homology"/>
<comment type="function">
    <text evidence="1">Component of the RIX1 complex required for processing of ITS2 sequences from 35S pre-rRNA.</text>
</comment>
<comment type="subunit">
    <text evidence="1">Component of the RIX1 complex, composed of ipi1, rix1/ipi2 and crb3/ipi3 in a 1:2:2 stoichiometry. The complex interacts (via rix1) with mdn1 (via its hexameric AAA ATPase ring) and the pre-60S ribosome particles.</text>
</comment>
<comment type="subcellular location">
    <subcellularLocation>
        <location evidence="1">Nucleus</location>
    </subcellularLocation>
</comment>
<comment type="similarity">
    <text evidence="2">Belongs to the IPI1/TEX10 family.</text>
</comment>
<sequence>MGKSKKAKAKRADFNKQKLKVGKSKNAPNNFTDTSFRTKTLVLPTQAALEKEDFNTTAKDQAYFAHLLGMLKHHNANQRQETLEKLTQYVLSHTSILTTSTALLLKLTSPLILDESSSVRDCLYRFLEKFIYIMGPELLEPNIGMIFLYTHSGMTHITPSIRNDSTKFLSLLINACKDRLSSSAISLQWKKTLECFTNLLGWNSESASVKRTTSFSKKSSANMIRHLTVCNDFLQLGLNPKLQAKNQQSSVHLKYPYLQQCIVIHPKYEAFRSPCSFAYLSLFNPNKHDLVDNPTFRWQTIYPLIPGIIEFIRNSWSDACPVVKDGSNSPSASKVCRTVLSMLGLFTEQVFSVADEPNNHRKKISQVLRKINRDIELININYGTDSEWRGVLKGYDKLRERAVELDALENPGK</sequence>
<protein>
    <recommendedName>
        <fullName>Pre-rRNA-processing protein ipi1</fullName>
    </recommendedName>
</protein>
<accession>O94718</accession>
<keyword id="KW-0539">Nucleus</keyword>
<keyword id="KW-1185">Reference proteome</keyword>
<keyword id="KW-0690">Ribosome biogenesis</keyword>
<keyword id="KW-0698">rRNA processing</keyword>
<dbReference type="EMBL" id="CU329672">
    <property type="protein sequence ID" value="CAB38162.2"/>
    <property type="molecule type" value="Genomic_DNA"/>
</dbReference>
<dbReference type="PIR" id="T40954">
    <property type="entry name" value="T40954"/>
</dbReference>
<dbReference type="RefSeq" id="NP_587964.2">
    <property type="nucleotide sequence ID" value="NM_001022955.3"/>
</dbReference>
<dbReference type="SMR" id="O94718"/>
<dbReference type="BioGRID" id="275817">
    <property type="interactions" value="2"/>
</dbReference>
<dbReference type="FunCoup" id="O94718">
    <property type="interactions" value="58"/>
</dbReference>
<dbReference type="STRING" id="284812.O94718"/>
<dbReference type="PaxDb" id="4896-SPCC1393.06c.1"/>
<dbReference type="EnsemblFungi" id="SPCC1393.06c.1">
    <property type="protein sequence ID" value="SPCC1393.06c.1:pep"/>
    <property type="gene ID" value="SPCC1393.06c"/>
</dbReference>
<dbReference type="GeneID" id="2539247"/>
<dbReference type="KEGG" id="spo:2539247"/>
<dbReference type="PomBase" id="SPCC1393.06c">
    <property type="gene designation" value="ipi1"/>
</dbReference>
<dbReference type="VEuPathDB" id="FungiDB:SPCC1393.06c"/>
<dbReference type="eggNOG" id="KOG2149">
    <property type="taxonomic scope" value="Eukaryota"/>
</dbReference>
<dbReference type="HOGENOM" id="CLU_674656_0_0_1"/>
<dbReference type="InParanoid" id="O94718"/>
<dbReference type="OMA" id="HSGMTHI"/>
<dbReference type="PhylomeDB" id="O94718"/>
<dbReference type="Reactome" id="R-SPO-6791226">
    <property type="pathway name" value="Major pathway of rRNA processing in the nucleolus and cytosol"/>
</dbReference>
<dbReference type="PRO" id="PR:O94718"/>
<dbReference type="Proteomes" id="UP000002485">
    <property type="component" value="Chromosome III"/>
</dbReference>
<dbReference type="GO" id="GO:0000792">
    <property type="term" value="C:heterochromatin"/>
    <property type="evidence" value="ECO:0000314"/>
    <property type="project" value="PomBase"/>
</dbReference>
<dbReference type="GO" id="GO:0005634">
    <property type="term" value="C:nucleus"/>
    <property type="evidence" value="ECO:0007005"/>
    <property type="project" value="PomBase"/>
</dbReference>
<dbReference type="GO" id="GO:0120330">
    <property type="term" value="C:rixosome complex"/>
    <property type="evidence" value="ECO:0000314"/>
    <property type="project" value="PomBase"/>
</dbReference>
<dbReference type="GO" id="GO:0006364">
    <property type="term" value="P:rRNA processing"/>
    <property type="evidence" value="ECO:0000315"/>
    <property type="project" value="PomBase"/>
</dbReference>
<dbReference type="Gene3D" id="1.25.10.10">
    <property type="entry name" value="Leucine-rich Repeat Variant"/>
    <property type="match status" value="1"/>
</dbReference>
<dbReference type="InterPro" id="IPR011989">
    <property type="entry name" value="ARM-like"/>
</dbReference>
<dbReference type="InterPro" id="IPR016024">
    <property type="entry name" value="ARM-type_fold"/>
</dbReference>
<dbReference type="InterPro" id="IPR024679">
    <property type="entry name" value="Ipi1_N"/>
</dbReference>
<dbReference type="PANTHER" id="PTHR16056">
    <property type="entry name" value="REGULATOR OF MICROTUBULE DYNAMICS PROTEIN"/>
    <property type="match status" value="1"/>
</dbReference>
<dbReference type="PANTHER" id="PTHR16056:SF2">
    <property type="entry name" value="TESTIS-EXPRESSED PROTEIN 10"/>
    <property type="match status" value="1"/>
</dbReference>
<dbReference type="Pfam" id="PF12333">
    <property type="entry name" value="Ipi1_N"/>
    <property type="match status" value="1"/>
</dbReference>
<dbReference type="SUPFAM" id="SSF48371">
    <property type="entry name" value="ARM repeat"/>
    <property type="match status" value="1"/>
</dbReference>
<reference key="1">
    <citation type="journal article" date="2002" name="Nature">
        <title>The genome sequence of Schizosaccharomyces pombe.</title>
        <authorList>
            <person name="Wood V."/>
            <person name="Gwilliam R."/>
            <person name="Rajandream M.A."/>
            <person name="Lyne M.H."/>
            <person name="Lyne R."/>
            <person name="Stewart A."/>
            <person name="Sgouros J.G."/>
            <person name="Peat N."/>
            <person name="Hayles J."/>
            <person name="Baker S.G."/>
            <person name="Basham D."/>
            <person name="Bowman S."/>
            <person name="Brooks K."/>
            <person name="Brown D."/>
            <person name="Brown S."/>
            <person name="Chillingworth T."/>
            <person name="Churcher C.M."/>
            <person name="Collins M."/>
            <person name="Connor R."/>
            <person name="Cronin A."/>
            <person name="Davis P."/>
            <person name="Feltwell T."/>
            <person name="Fraser A."/>
            <person name="Gentles S."/>
            <person name="Goble A."/>
            <person name="Hamlin N."/>
            <person name="Harris D.E."/>
            <person name="Hidalgo J."/>
            <person name="Hodgson G."/>
            <person name="Holroyd S."/>
            <person name="Hornsby T."/>
            <person name="Howarth S."/>
            <person name="Huckle E.J."/>
            <person name="Hunt S."/>
            <person name="Jagels K."/>
            <person name="James K.D."/>
            <person name="Jones L."/>
            <person name="Jones M."/>
            <person name="Leather S."/>
            <person name="McDonald S."/>
            <person name="McLean J."/>
            <person name="Mooney P."/>
            <person name="Moule S."/>
            <person name="Mungall K.L."/>
            <person name="Murphy L.D."/>
            <person name="Niblett D."/>
            <person name="Odell C."/>
            <person name="Oliver K."/>
            <person name="O'Neil S."/>
            <person name="Pearson D."/>
            <person name="Quail M.A."/>
            <person name="Rabbinowitsch E."/>
            <person name="Rutherford K.M."/>
            <person name="Rutter S."/>
            <person name="Saunders D."/>
            <person name="Seeger K."/>
            <person name="Sharp S."/>
            <person name="Skelton J."/>
            <person name="Simmonds M.N."/>
            <person name="Squares R."/>
            <person name="Squares S."/>
            <person name="Stevens K."/>
            <person name="Taylor K."/>
            <person name="Taylor R.G."/>
            <person name="Tivey A."/>
            <person name="Walsh S.V."/>
            <person name="Warren T."/>
            <person name="Whitehead S."/>
            <person name="Woodward J.R."/>
            <person name="Volckaert G."/>
            <person name="Aert R."/>
            <person name="Robben J."/>
            <person name="Grymonprez B."/>
            <person name="Weltjens I."/>
            <person name="Vanstreels E."/>
            <person name="Rieger M."/>
            <person name="Schaefer M."/>
            <person name="Mueller-Auer S."/>
            <person name="Gabel C."/>
            <person name="Fuchs M."/>
            <person name="Duesterhoeft A."/>
            <person name="Fritzc C."/>
            <person name="Holzer E."/>
            <person name="Moestl D."/>
            <person name="Hilbert H."/>
            <person name="Borzym K."/>
            <person name="Langer I."/>
            <person name="Beck A."/>
            <person name="Lehrach H."/>
            <person name="Reinhardt R."/>
            <person name="Pohl T.M."/>
            <person name="Eger P."/>
            <person name="Zimmermann W."/>
            <person name="Wedler H."/>
            <person name="Wambutt R."/>
            <person name="Purnelle B."/>
            <person name="Goffeau A."/>
            <person name="Cadieu E."/>
            <person name="Dreano S."/>
            <person name="Gloux S."/>
            <person name="Lelaure V."/>
            <person name="Mottier S."/>
            <person name="Galibert F."/>
            <person name="Aves S.J."/>
            <person name="Xiang Z."/>
            <person name="Hunt C."/>
            <person name="Moore K."/>
            <person name="Hurst S.M."/>
            <person name="Lucas M."/>
            <person name="Rochet M."/>
            <person name="Gaillardin C."/>
            <person name="Tallada V.A."/>
            <person name="Garzon A."/>
            <person name="Thode G."/>
            <person name="Daga R.R."/>
            <person name="Cruzado L."/>
            <person name="Jimenez J."/>
            <person name="Sanchez M."/>
            <person name="del Rey F."/>
            <person name="Benito J."/>
            <person name="Dominguez A."/>
            <person name="Revuelta J.L."/>
            <person name="Moreno S."/>
            <person name="Armstrong J."/>
            <person name="Forsburg S.L."/>
            <person name="Cerutti L."/>
            <person name="Lowe T."/>
            <person name="McCombie W.R."/>
            <person name="Paulsen I."/>
            <person name="Potashkin J."/>
            <person name="Shpakovski G.V."/>
            <person name="Ussery D."/>
            <person name="Barrell B.G."/>
            <person name="Nurse P."/>
        </authorList>
    </citation>
    <scope>NUCLEOTIDE SEQUENCE [LARGE SCALE GENOMIC DNA]</scope>
    <source>
        <strain>972 / ATCC 24843</strain>
    </source>
</reference>
<feature type="chain" id="PRO_0000308729" description="Pre-rRNA-processing protein ipi1">
    <location>
        <begin position="1"/>
        <end position="413"/>
    </location>
</feature>
<evidence type="ECO:0000250" key="1">
    <source>
        <dbReference type="UniProtKB" id="P38803"/>
    </source>
</evidence>
<evidence type="ECO:0000305" key="2"/>